<sequence length="339" mass="36816">MTDRSPFETDMLTLTRYVMEKGRQAKGTGELTQLLNSMLTAIKAISSAVRKAGLAHLYGIAGTVNVTGDEVKKLDVLSNALVINMLQSSYSTCVLVSEENKEAIITAKERRGKYVVCFDPLDGSSNIDCLASIGTIFAIYRKTTEDEPSDKDALQPGRNIVAAGYALYGSATLVALSTGQGVDLFMLDPALGEFVLVEKDVKIKKKGKIFSLNEGYAKYFDAATTEYVQKKKFPEDGSAPYGARYVGSMVADVHRTLVYGGIFLYPANQKSPKGKLRLLYECNPVAYIIEQAGGLATTGTQPVLDVKPESIHQRVPLILGSPDDVQEYLACVQKNQAGR</sequence>
<dbReference type="EC" id="3.1.3.11"/>
<dbReference type="EMBL" id="AJ272520">
    <property type="protein sequence ID" value="CAB76202.1"/>
    <property type="molecule type" value="mRNA"/>
</dbReference>
<dbReference type="RefSeq" id="NP_001075597.1">
    <property type="nucleotide sequence ID" value="NM_001082128.1"/>
</dbReference>
<dbReference type="RefSeq" id="XP_051707173.2">
    <property type="nucleotide sequence ID" value="XM_051851213.2"/>
</dbReference>
<dbReference type="RefSeq" id="XP_051707666.2">
    <property type="nucleotide sequence ID" value="XM_051851706.2"/>
</dbReference>
<dbReference type="SMR" id="Q9N0J6"/>
<dbReference type="FunCoup" id="Q9N0J6">
    <property type="interactions" value="138"/>
</dbReference>
<dbReference type="GeneID" id="100008853"/>
<dbReference type="KEGG" id="ocu:100008853"/>
<dbReference type="CTD" id="8789"/>
<dbReference type="InParanoid" id="Q9N0J6"/>
<dbReference type="OrthoDB" id="10256725at2759"/>
<dbReference type="SABIO-RK" id="Q9N0J6"/>
<dbReference type="UniPathway" id="UPA00138"/>
<dbReference type="Proteomes" id="UP000001811">
    <property type="component" value="Unplaced"/>
</dbReference>
<dbReference type="GO" id="GO:0070161">
    <property type="term" value="C:anchoring junction"/>
    <property type="evidence" value="ECO:0007669"/>
    <property type="project" value="UniProtKB-SubCell"/>
</dbReference>
<dbReference type="GO" id="GO:0005829">
    <property type="term" value="C:cytosol"/>
    <property type="evidence" value="ECO:0007669"/>
    <property type="project" value="TreeGrafter"/>
</dbReference>
<dbReference type="GO" id="GO:0005634">
    <property type="term" value="C:nucleus"/>
    <property type="evidence" value="ECO:0007669"/>
    <property type="project" value="UniProtKB-SubCell"/>
</dbReference>
<dbReference type="GO" id="GO:0030018">
    <property type="term" value="C:Z disc"/>
    <property type="evidence" value="ECO:0007669"/>
    <property type="project" value="UniProtKB-SubCell"/>
</dbReference>
<dbReference type="GO" id="GO:0042132">
    <property type="term" value="F:fructose 1,6-bisphosphate 1-phosphatase activity"/>
    <property type="evidence" value="ECO:0007669"/>
    <property type="project" value="UniProtKB-EC"/>
</dbReference>
<dbReference type="GO" id="GO:0046872">
    <property type="term" value="F:metal ion binding"/>
    <property type="evidence" value="ECO:0007669"/>
    <property type="project" value="UniProtKB-KW"/>
</dbReference>
<dbReference type="GO" id="GO:0030388">
    <property type="term" value="P:fructose 1,6-bisphosphate metabolic process"/>
    <property type="evidence" value="ECO:0007669"/>
    <property type="project" value="TreeGrafter"/>
</dbReference>
<dbReference type="GO" id="GO:0006002">
    <property type="term" value="P:fructose 6-phosphate metabolic process"/>
    <property type="evidence" value="ECO:0007669"/>
    <property type="project" value="TreeGrafter"/>
</dbReference>
<dbReference type="GO" id="GO:0006000">
    <property type="term" value="P:fructose metabolic process"/>
    <property type="evidence" value="ECO:0007669"/>
    <property type="project" value="TreeGrafter"/>
</dbReference>
<dbReference type="GO" id="GO:0006094">
    <property type="term" value="P:gluconeogenesis"/>
    <property type="evidence" value="ECO:0007669"/>
    <property type="project" value="UniProtKB-UniPathway"/>
</dbReference>
<dbReference type="GO" id="GO:0005986">
    <property type="term" value="P:sucrose biosynthetic process"/>
    <property type="evidence" value="ECO:0007669"/>
    <property type="project" value="TreeGrafter"/>
</dbReference>
<dbReference type="CDD" id="cd00354">
    <property type="entry name" value="FBPase"/>
    <property type="match status" value="1"/>
</dbReference>
<dbReference type="FunFam" id="3.40.190.80:FF:000001">
    <property type="entry name" value="Fructose-1,6-bisphosphatase class 1"/>
    <property type="match status" value="1"/>
</dbReference>
<dbReference type="FunFam" id="3.30.540.10:FF:000005">
    <property type="entry name" value="Fructose-1,6-bisphosphatase isozyme 2"/>
    <property type="match status" value="1"/>
</dbReference>
<dbReference type="Gene3D" id="3.40.190.80">
    <property type="match status" value="1"/>
</dbReference>
<dbReference type="Gene3D" id="3.30.540.10">
    <property type="entry name" value="Fructose-1,6-Bisphosphatase, subunit A, domain 1"/>
    <property type="match status" value="1"/>
</dbReference>
<dbReference type="HAMAP" id="MF_01855">
    <property type="entry name" value="FBPase_class1"/>
    <property type="match status" value="1"/>
</dbReference>
<dbReference type="InterPro" id="IPR044015">
    <property type="entry name" value="FBPase_C_dom"/>
</dbReference>
<dbReference type="InterPro" id="IPR000146">
    <property type="entry name" value="FBPase_class-1"/>
</dbReference>
<dbReference type="InterPro" id="IPR033391">
    <property type="entry name" value="FBPase_N"/>
</dbReference>
<dbReference type="InterPro" id="IPR028343">
    <property type="entry name" value="FBPtase"/>
</dbReference>
<dbReference type="InterPro" id="IPR020548">
    <property type="entry name" value="Fructose_bisphosphatase_AS"/>
</dbReference>
<dbReference type="NCBIfam" id="NF006778">
    <property type="entry name" value="PRK09293.1-1"/>
    <property type="match status" value="1"/>
</dbReference>
<dbReference type="PANTHER" id="PTHR11556:SF13">
    <property type="entry name" value="FRUCTOSE-1,6-BISPHOSPHATASE ISOZYME 2"/>
    <property type="match status" value="1"/>
</dbReference>
<dbReference type="PANTHER" id="PTHR11556">
    <property type="entry name" value="FRUCTOSE-1,6-BISPHOSPHATASE-RELATED"/>
    <property type="match status" value="1"/>
</dbReference>
<dbReference type="Pfam" id="PF00316">
    <property type="entry name" value="FBPase"/>
    <property type="match status" value="1"/>
</dbReference>
<dbReference type="Pfam" id="PF18913">
    <property type="entry name" value="FBPase_C"/>
    <property type="match status" value="1"/>
</dbReference>
<dbReference type="PIRSF" id="PIRSF500210">
    <property type="entry name" value="FBPtase"/>
    <property type="match status" value="1"/>
</dbReference>
<dbReference type="PIRSF" id="PIRSF000904">
    <property type="entry name" value="FBPtase_SBPase"/>
    <property type="match status" value="1"/>
</dbReference>
<dbReference type="PRINTS" id="PR00115">
    <property type="entry name" value="F16BPHPHTASE"/>
</dbReference>
<dbReference type="SUPFAM" id="SSF56655">
    <property type="entry name" value="Carbohydrate phosphatase"/>
    <property type="match status" value="1"/>
</dbReference>
<dbReference type="PROSITE" id="PS00124">
    <property type="entry name" value="FBPASE"/>
    <property type="match status" value="1"/>
</dbReference>
<keyword id="KW-0021">Allosteric enzyme</keyword>
<keyword id="KW-0106">Calcium</keyword>
<keyword id="KW-0119">Carbohydrate metabolism</keyword>
<keyword id="KW-0965">Cell junction</keyword>
<keyword id="KW-0963">Cytoplasm</keyword>
<keyword id="KW-0312">Gluconeogenesis</keyword>
<keyword id="KW-0378">Hydrolase</keyword>
<keyword id="KW-0460">Magnesium</keyword>
<keyword id="KW-0479">Metal-binding</keyword>
<keyword id="KW-0539">Nucleus</keyword>
<keyword id="KW-0597">Phosphoprotein</keyword>
<keyword id="KW-1185">Reference proteome</keyword>
<protein>
    <recommendedName>
        <fullName>Fructose-1,6-bisphosphatase isozyme 2</fullName>
        <shortName>FBPase 2</shortName>
        <ecNumber>3.1.3.11</ecNumber>
    </recommendedName>
    <alternativeName>
        <fullName>D-fructose-1,6-bisphosphate 1-phosphohydrolase 2</fullName>
    </alternativeName>
    <alternativeName>
        <fullName>Muscle FBPase</fullName>
    </alternativeName>
</protein>
<gene>
    <name type="primary">FBP2</name>
</gene>
<proteinExistence type="evidence at protein level"/>
<evidence type="ECO:0000250" key="1"/>
<evidence type="ECO:0000250" key="2">
    <source>
        <dbReference type="UniProtKB" id="Q9Z1N1"/>
    </source>
</evidence>
<evidence type="ECO:0000269" key="3">
    <source>
    </source>
</evidence>
<evidence type="ECO:0000269" key="4">
    <source>
    </source>
</evidence>
<evidence type="ECO:0000269" key="5">
    <source>
    </source>
</evidence>
<evidence type="ECO:0000269" key="6">
    <source>
    </source>
</evidence>
<evidence type="ECO:0000269" key="7">
    <source>
    </source>
</evidence>
<evidence type="ECO:0000305" key="8"/>
<feature type="chain" id="PRO_0000200506" description="Fructose-1,6-bisphosphatase isozyme 2">
    <location>
        <begin position="1"/>
        <end position="339"/>
    </location>
</feature>
<feature type="region of interest" description="Important for interaction with ALDOA" evidence="1">
    <location>
        <begin position="3"/>
        <end position="10"/>
    </location>
</feature>
<feature type="short sequence motif" description="Nuclear localization signal" evidence="1">
    <location>
        <begin position="204"/>
        <end position="208"/>
    </location>
</feature>
<feature type="binding site" evidence="1">
    <location>
        <position position="18"/>
    </location>
    <ligand>
        <name>AMP</name>
        <dbReference type="ChEBI" id="CHEBI:456215"/>
    </ligand>
</feature>
<feature type="binding site" evidence="1">
    <location>
        <begin position="28"/>
        <end position="32"/>
    </location>
    <ligand>
        <name>AMP</name>
        <dbReference type="ChEBI" id="CHEBI:456215"/>
    </ligand>
</feature>
<feature type="binding site" evidence="1">
    <location>
        <position position="69"/>
    </location>
    <ligand>
        <name>Mg(2+)</name>
        <dbReference type="ChEBI" id="CHEBI:18420"/>
        <label>1</label>
    </ligand>
</feature>
<feature type="binding site" evidence="1">
    <location>
        <position position="98"/>
    </location>
    <ligand>
        <name>Mg(2+)</name>
        <dbReference type="ChEBI" id="CHEBI:18420"/>
        <label>1</label>
    </ligand>
</feature>
<feature type="binding site" evidence="1">
    <location>
        <position position="98"/>
    </location>
    <ligand>
        <name>Mg(2+)</name>
        <dbReference type="ChEBI" id="CHEBI:18420"/>
        <label>2</label>
    </ligand>
</feature>
<feature type="binding site" evidence="1">
    <location>
        <begin position="113"/>
        <end position="114"/>
    </location>
    <ligand>
        <name>AMP</name>
        <dbReference type="ChEBI" id="CHEBI:456215"/>
    </ligand>
</feature>
<feature type="binding site" evidence="1">
    <location>
        <position position="119"/>
    </location>
    <ligand>
        <name>Mg(2+)</name>
        <dbReference type="ChEBI" id="CHEBI:18420"/>
        <label>2</label>
    </ligand>
</feature>
<feature type="binding site" evidence="1">
    <location>
        <position position="119"/>
    </location>
    <ligand>
        <name>Mg(2+)</name>
        <dbReference type="ChEBI" id="CHEBI:18420"/>
        <label>3</label>
    </ligand>
</feature>
<feature type="binding site" evidence="1">
    <location>
        <position position="121"/>
    </location>
    <ligand>
        <name>Mg(2+)</name>
        <dbReference type="ChEBI" id="CHEBI:18420"/>
        <label>2</label>
    </ligand>
</feature>
<feature type="binding site" evidence="1">
    <location>
        <position position="122"/>
    </location>
    <ligand>
        <name>Mg(2+)</name>
        <dbReference type="ChEBI" id="CHEBI:18420"/>
        <label>3</label>
    </ligand>
</feature>
<feature type="binding site" evidence="1">
    <location>
        <position position="122"/>
    </location>
    <ligand>
        <name>substrate</name>
    </ligand>
</feature>
<feature type="binding site" evidence="1">
    <location>
        <position position="141"/>
    </location>
    <ligand>
        <name>AMP</name>
        <dbReference type="ChEBI" id="CHEBI:456215"/>
    </ligand>
</feature>
<feature type="binding site" evidence="1">
    <location>
        <begin position="213"/>
        <end position="216"/>
    </location>
    <ligand>
        <name>substrate</name>
    </ligand>
</feature>
<feature type="binding site" evidence="1">
    <location>
        <begin position="245"/>
        <end position="249"/>
    </location>
    <ligand>
        <name>substrate</name>
    </ligand>
</feature>
<feature type="binding site" evidence="1">
    <location>
        <position position="265"/>
    </location>
    <ligand>
        <name>substrate</name>
    </ligand>
</feature>
<feature type="binding site" evidence="1">
    <location>
        <position position="275"/>
    </location>
    <ligand>
        <name>substrate</name>
    </ligand>
</feature>
<feature type="binding site" evidence="1">
    <location>
        <position position="281"/>
    </location>
    <ligand>
        <name>Mg(2+)</name>
        <dbReference type="ChEBI" id="CHEBI:18420"/>
        <label>3</label>
    </ligand>
</feature>
<feature type="site" description="Important for the conversion from active R-state to inactive T-state in the presence of AMP" evidence="1">
    <location>
        <position position="33"/>
    </location>
</feature>
<feature type="modified residue" description="Phosphotyrosine" evidence="2">
    <location>
        <position position="216"/>
    </location>
</feature>
<feature type="modified residue" description="Phosphotyrosine" evidence="2">
    <location>
        <position position="219"/>
    </location>
</feature>
<comment type="function">
    <text evidence="4 5 6 7">Catalyzes the hydrolysis of fructose 1,6-bisphosphate to fructose 6-phosphate in the presence of divalent cations and probably participates in glycogen synthesis from carbohydrate precursors, such as lactate.</text>
</comment>
<comment type="catalytic activity">
    <reaction evidence="4 5 6 7">
        <text>beta-D-fructose 1,6-bisphosphate + H2O = beta-D-fructose 6-phosphate + phosphate</text>
        <dbReference type="Rhea" id="RHEA:11064"/>
        <dbReference type="ChEBI" id="CHEBI:15377"/>
        <dbReference type="ChEBI" id="CHEBI:32966"/>
        <dbReference type="ChEBI" id="CHEBI:43474"/>
        <dbReference type="ChEBI" id="CHEBI:57634"/>
        <dbReference type="EC" id="3.1.3.11"/>
    </reaction>
</comment>
<comment type="cofactor">
    <cofactor evidence="1">
        <name>Mg(2+)</name>
        <dbReference type="ChEBI" id="CHEBI:18420"/>
    </cofactor>
    <text evidence="1">Binds 3 Mg(2+) ions per subunit.</text>
</comment>
<comment type="activity regulation">
    <text evidence="4 5 6 7">Subject to complex allosteric regulation. The enzyme can assume an active R-state, or an inactive T-state. Intermediate conformations may exist. AMP acts as an allosteric inhibitor. Fructose 2,6-bisphosphate acts as a competitive inhibitor. Strongly inhibited by Ca(2+).</text>
</comment>
<comment type="biophysicochemical properties">
    <kinetics>
        <KM evidence="6">2.1 uM for fructose 1,6-bisphosphate</KM>
    </kinetics>
</comment>
<comment type="pathway">
    <text>Carbohydrate biosynthesis; gluconeogenesis.</text>
</comment>
<comment type="subunit">
    <text evidence="3 4 5 7">Homotetramer. Interacts with ALDOA; the interaction blocks inhibition by physiological concentrations of AMP and reduces inhibition by Ca(2+). Interacts with alpha-actinin and F-actin.</text>
</comment>
<comment type="subcellular location">
    <subcellularLocation>
        <location evidence="1">Cell junction</location>
    </subcellularLocation>
    <subcellularLocation>
        <location evidence="1">Cytoplasm</location>
    </subcellularLocation>
    <subcellularLocation>
        <location evidence="1">Nucleus</location>
    </subcellularLocation>
    <subcellularLocation>
        <location evidence="5">Cytoplasm</location>
        <location evidence="5">Myofibril</location>
        <location evidence="5">Sarcomere</location>
        <location evidence="5">Z line</location>
    </subcellularLocation>
    <text evidence="1">In neonatal cardiomyocytes, distributed throughout the cytosol, accumulating in the intercalated disks which occur at the Z line of cardiomyocytes and connect adjacent cells, and also located in the nucleus; dissociates from the Z line following an increase in cytosolic Ca(2+) concentration (By similarity). In muscle precursor cells, localizes predominantly to the nucleus and to a lesser extent to the cytoplasm at the proliferative phase, while mainly localizing to the cytoplasm at the differentiation phase (By similarity). Colocalizes with ALDOA and alpha-actinin on both sides of the Z line of skeletal muscle; dissociates rapidly from the Z line following an increase in cytosolic Ca(2+) concentration.</text>
</comment>
<comment type="similarity">
    <text evidence="8">Belongs to the FBPase class 1 family.</text>
</comment>
<reference key="1">
    <citation type="journal article" date="2002" name="Gene">
        <title>Fructose-1,6-bisphosphatase genes in animals.</title>
        <authorList>
            <person name="Tillmann H."/>
            <person name="Bernhard D."/>
            <person name="Eschrich K."/>
        </authorList>
    </citation>
    <scope>NUCLEOTIDE SEQUENCE [MRNA]</scope>
    <source>
        <tissue>Muscle</tissue>
    </source>
</reference>
<reference key="2">
    <citation type="journal article" date="2003" name="FEBS Lett.">
        <title>Muscle FBPase in a complex with muscle aldolase is insensitive to AMP inhibition.</title>
        <authorList>
            <person name="Rakus D."/>
            <person name="Pasek M."/>
            <person name="Krotkiewski H."/>
            <person name="Dzugaj A."/>
        </authorList>
    </citation>
    <scope>FUNCTION</scope>
    <scope>CATALYTIC ACTIVITY</scope>
    <scope>ACTIVITY REGULATION</scope>
    <scope>INTERACTION WITH ALDOA</scope>
</reference>
<reference key="3">
    <citation type="journal article" date="2003" name="Histol. Histopathol.">
        <title>Immunohistochemical localization of human fructose-1,6-bisphosphatase in subcellular structures of myocytes.</title>
        <authorList>
            <person name="Gizak A."/>
            <person name="Rakus D."/>
            <person name="Dzugaj A."/>
        </authorList>
    </citation>
    <scope>INTERACTION WITH ALPHA-ACTININ AND F-ACTIN</scope>
</reference>
<reference key="4">
    <citation type="journal article" date="2005" name="FEBS Lett.">
        <title>The effect of calcium ions on subcellular localization of aldolase-FBPase complex in skeletal muscle.</title>
        <authorList>
            <person name="Mamczur P."/>
            <person name="Rakus D."/>
            <person name="Gizak A."/>
            <person name="Dus D."/>
            <person name="Dzugaj A."/>
        </authorList>
    </citation>
    <scope>FUNCTION</scope>
    <scope>CATALYTIC ACTIVITY</scope>
    <scope>ACTIVITY REGULATION</scope>
    <scope>INTERACTION WITH ALDOA AND ALPHA-ACTININ</scope>
    <scope>SUBCELLULAR LOCATION</scope>
</reference>
<reference key="5">
    <citation type="journal article" date="2007" name="FEBS Lett.">
        <title>Glu 69 is essential for the high sensitivity of muscle fructose-1,6-bisphosphatase inhibition by calcium ions.</title>
        <authorList>
            <person name="Zarzycki M."/>
            <person name="Maciaszczyk E."/>
            <person name="Dzugaj A."/>
        </authorList>
    </citation>
    <scope>FUNCTION</scope>
    <scope>CATALYTIC ACTIVITY</scope>
    <scope>ACTIVITY REGULATION</scope>
    <scope>BIOPHYSICOCHEMICAL PROPERTIES</scope>
</reference>
<reference key="6">
    <citation type="journal article" date="2008" name="Proteins">
        <title>Evolutionary conserved N-terminal region of human muscle fructose 1,6-bisphosphatase regulates its activity and the interaction with aldolase.</title>
        <authorList>
            <person name="Gizak A."/>
            <person name="Maciaszczyk E."/>
            <person name="Dzugaj A."/>
            <person name="Eschrich K."/>
            <person name="Rakus D."/>
        </authorList>
    </citation>
    <scope>FUNCTION</scope>
    <scope>CATALYTIC ACTIVITY</scope>
    <scope>ACTIVITY REGULATION</scope>
    <scope>INTERACTION WITH ALDOA</scope>
</reference>
<accession>Q9N0J6</accession>
<name>F16P2_RABIT</name>
<organism>
    <name type="scientific">Oryctolagus cuniculus</name>
    <name type="common">Rabbit</name>
    <dbReference type="NCBI Taxonomy" id="9986"/>
    <lineage>
        <taxon>Eukaryota</taxon>
        <taxon>Metazoa</taxon>
        <taxon>Chordata</taxon>
        <taxon>Craniata</taxon>
        <taxon>Vertebrata</taxon>
        <taxon>Euteleostomi</taxon>
        <taxon>Mammalia</taxon>
        <taxon>Eutheria</taxon>
        <taxon>Euarchontoglires</taxon>
        <taxon>Glires</taxon>
        <taxon>Lagomorpha</taxon>
        <taxon>Leporidae</taxon>
        <taxon>Oryctolagus</taxon>
    </lineage>
</organism>